<dbReference type="EC" id="2.8.1.13" evidence="1"/>
<dbReference type="EMBL" id="CP000517">
    <property type="protein sequence ID" value="ABX26990.1"/>
    <property type="molecule type" value="Genomic_DNA"/>
</dbReference>
<dbReference type="RefSeq" id="WP_012211708.1">
    <property type="nucleotide sequence ID" value="NC_010080.1"/>
</dbReference>
<dbReference type="SMR" id="A8YUQ2"/>
<dbReference type="GeneID" id="83725227"/>
<dbReference type="KEGG" id="lhe:lhv_0869"/>
<dbReference type="eggNOG" id="COG0482">
    <property type="taxonomic scope" value="Bacteria"/>
</dbReference>
<dbReference type="HOGENOM" id="CLU_035188_1_0_9"/>
<dbReference type="Proteomes" id="UP000000790">
    <property type="component" value="Chromosome"/>
</dbReference>
<dbReference type="GO" id="GO:0005737">
    <property type="term" value="C:cytoplasm"/>
    <property type="evidence" value="ECO:0007669"/>
    <property type="project" value="UniProtKB-SubCell"/>
</dbReference>
<dbReference type="GO" id="GO:0005524">
    <property type="term" value="F:ATP binding"/>
    <property type="evidence" value="ECO:0007669"/>
    <property type="project" value="UniProtKB-KW"/>
</dbReference>
<dbReference type="GO" id="GO:0000049">
    <property type="term" value="F:tRNA binding"/>
    <property type="evidence" value="ECO:0007669"/>
    <property type="project" value="UniProtKB-KW"/>
</dbReference>
<dbReference type="GO" id="GO:0103016">
    <property type="term" value="F:tRNA-uridine 2-sulfurtransferase activity"/>
    <property type="evidence" value="ECO:0007669"/>
    <property type="project" value="UniProtKB-EC"/>
</dbReference>
<dbReference type="GO" id="GO:0002143">
    <property type="term" value="P:tRNA wobble position uridine thiolation"/>
    <property type="evidence" value="ECO:0007669"/>
    <property type="project" value="TreeGrafter"/>
</dbReference>
<dbReference type="CDD" id="cd01998">
    <property type="entry name" value="MnmA_TRMU-like"/>
    <property type="match status" value="1"/>
</dbReference>
<dbReference type="FunFam" id="2.30.30.280:FF:000001">
    <property type="entry name" value="tRNA-specific 2-thiouridylase MnmA"/>
    <property type="match status" value="1"/>
</dbReference>
<dbReference type="FunFam" id="2.40.30.10:FF:000023">
    <property type="entry name" value="tRNA-specific 2-thiouridylase MnmA"/>
    <property type="match status" value="1"/>
</dbReference>
<dbReference type="FunFam" id="3.40.50.620:FF:000004">
    <property type="entry name" value="tRNA-specific 2-thiouridylase MnmA"/>
    <property type="match status" value="1"/>
</dbReference>
<dbReference type="Gene3D" id="2.30.30.280">
    <property type="entry name" value="Adenine nucleotide alpha hydrolases-like domains"/>
    <property type="match status" value="1"/>
</dbReference>
<dbReference type="Gene3D" id="3.40.50.620">
    <property type="entry name" value="HUPs"/>
    <property type="match status" value="1"/>
</dbReference>
<dbReference type="Gene3D" id="2.40.30.10">
    <property type="entry name" value="Translation factors"/>
    <property type="match status" value="1"/>
</dbReference>
<dbReference type="HAMAP" id="MF_00144">
    <property type="entry name" value="tRNA_thiouridyl_MnmA"/>
    <property type="match status" value="1"/>
</dbReference>
<dbReference type="InterPro" id="IPR004506">
    <property type="entry name" value="MnmA-like"/>
</dbReference>
<dbReference type="InterPro" id="IPR046885">
    <property type="entry name" value="MnmA-like_C"/>
</dbReference>
<dbReference type="InterPro" id="IPR046884">
    <property type="entry name" value="MnmA-like_central"/>
</dbReference>
<dbReference type="InterPro" id="IPR023382">
    <property type="entry name" value="MnmA-like_central_sf"/>
</dbReference>
<dbReference type="InterPro" id="IPR014729">
    <property type="entry name" value="Rossmann-like_a/b/a_fold"/>
</dbReference>
<dbReference type="NCBIfam" id="NF001138">
    <property type="entry name" value="PRK00143.1"/>
    <property type="match status" value="1"/>
</dbReference>
<dbReference type="NCBIfam" id="TIGR00420">
    <property type="entry name" value="trmU"/>
    <property type="match status" value="1"/>
</dbReference>
<dbReference type="PANTHER" id="PTHR11933:SF5">
    <property type="entry name" value="MITOCHONDRIAL TRNA-SPECIFIC 2-THIOURIDYLASE 1"/>
    <property type="match status" value="1"/>
</dbReference>
<dbReference type="PANTHER" id="PTHR11933">
    <property type="entry name" value="TRNA 5-METHYLAMINOMETHYL-2-THIOURIDYLATE -METHYLTRANSFERASE"/>
    <property type="match status" value="1"/>
</dbReference>
<dbReference type="Pfam" id="PF03054">
    <property type="entry name" value="tRNA_Me_trans"/>
    <property type="match status" value="1"/>
</dbReference>
<dbReference type="Pfam" id="PF20258">
    <property type="entry name" value="tRNA_Me_trans_C"/>
    <property type="match status" value="1"/>
</dbReference>
<dbReference type="Pfam" id="PF20259">
    <property type="entry name" value="tRNA_Me_trans_M"/>
    <property type="match status" value="1"/>
</dbReference>
<dbReference type="SUPFAM" id="SSF52402">
    <property type="entry name" value="Adenine nucleotide alpha hydrolases-like"/>
    <property type="match status" value="1"/>
</dbReference>
<evidence type="ECO:0000255" key="1">
    <source>
        <dbReference type="HAMAP-Rule" id="MF_00144"/>
    </source>
</evidence>
<proteinExistence type="inferred from homology"/>
<sequence length="375" mass="42070">MVDNSKTRVVVGMSGGVDSSVSALLLKQQGYDVVGVFMKNWDDTDDSGVCTATEDYEDVKKVADKIGIPYYSINFEKEYWHRVFEYFLNEYKKGRTPNPDVMCNSQIKFKSFLDFAMDLDADYIAMGHYAKTVKDADGLTHMMRPKDGNKDQTYFLSQLNQDQIKKVIFPLANLTKPQVREIALANGLATAKKKDSTGICFIGERNFRKFLSEFLPAKSGKMVTPDGKVVGEHAGLMYYTIGQRQGLGLGSTKESTDPWFVVGKDLKKNELIVEQGYDSKLLYASRLKASDMSFFTGKPDHDVEFHCSAKFRYRQCDVGVTVKYHADDNTADVYFDEPARAVTPGQALVLYQGEECLGGGNIDAAYQEDKQLQLV</sequence>
<accession>A8YUQ2</accession>
<comment type="function">
    <text evidence="1">Catalyzes the 2-thiolation of uridine at the wobble position (U34) of tRNA, leading to the formation of s(2)U34.</text>
</comment>
<comment type="catalytic activity">
    <reaction evidence="1">
        <text>S-sulfanyl-L-cysteinyl-[protein] + uridine(34) in tRNA + AH2 + ATP = 2-thiouridine(34) in tRNA + L-cysteinyl-[protein] + A + AMP + diphosphate + H(+)</text>
        <dbReference type="Rhea" id="RHEA:47032"/>
        <dbReference type="Rhea" id="RHEA-COMP:10131"/>
        <dbReference type="Rhea" id="RHEA-COMP:11726"/>
        <dbReference type="Rhea" id="RHEA-COMP:11727"/>
        <dbReference type="Rhea" id="RHEA-COMP:11728"/>
        <dbReference type="ChEBI" id="CHEBI:13193"/>
        <dbReference type="ChEBI" id="CHEBI:15378"/>
        <dbReference type="ChEBI" id="CHEBI:17499"/>
        <dbReference type="ChEBI" id="CHEBI:29950"/>
        <dbReference type="ChEBI" id="CHEBI:30616"/>
        <dbReference type="ChEBI" id="CHEBI:33019"/>
        <dbReference type="ChEBI" id="CHEBI:61963"/>
        <dbReference type="ChEBI" id="CHEBI:65315"/>
        <dbReference type="ChEBI" id="CHEBI:87170"/>
        <dbReference type="ChEBI" id="CHEBI:456215"/>
        <dbReference type="EC" id="2.8.1.13"/>
    </reaction>
</comment>
<comment type="subcellular location">
    <subcellularLocation>
        <location evidence="1">Cytoplasm</location>
    </subcellularLocation>
</comment>
<comment type="similarity">
    <text evidence="1">Belongs to the MnmA/TRMU family.</text>
</comment>
<organism>
    <name type="scientific">Lactobacillus helveticus (strain DPC 4571)</name>
    <dbReference type="NCBI Taxonomy" id="405566"/>
    <lineage>
        <taxon>Bacteria</taxon>
        <taxon>Bacillati</taxon>
        <taxon>Bacillota</taxon>
        <taxon>Bacilli</taxon>
        <taxon>Lactobacillales</taxon>
        <taxon>Lactobacillaceae</taxon>
        <taxon>Lactobacillus</taxon>
    </lineage>
</organism>
<name>MNMA_LACH4</name>
<feature type="chain" id="PRO_0000349674" description="tRNA-specific 2-thiouridylase MnmA">
    <location>
        <begin position="1"/>
        <end position="375"/>
    </location>
</feature>
<feature type="region of interest" description="Interaction with target base in tRNA" evidence="1">
    <location>
        <begin position="98"/>
        <end position="100"/>
    </location>
</feature>
<feature type="region of interest" description="Interaction with tRNA" evidence="1">
    <location>
        <begin position="150"/>
        <end position="152"/>
    </location>
</feature>
<feature type="region of interest" description="Interaction with tRNA" evidence="1">
    <location>
        <begin position="312"/>
        <end position="313"/>
    </location>
</feature>
<feature type="active site" description="Nucleophile" evidence="1">
    <location>
        <position position="103"/>
    </location>
</feature>
<feature type="active site" description="Cysteine persulfide intermediate" evidence="1">
    <location>
        <position position="200"/>
    </location>
</feature>
<feature type="binding site" evidence="1">
    <location>
        <begin position="12"/>
        <end position="19"/>
    </location>
    <ligand>
        <name>ATP</name>
        <dbReference type="ChEBI" id="CHEBI:30616"/>
    </ligand>
</feature>
<feature type="binding site" evidence="1">
    <location>
        <position position="38"/>
    </location>
    <ligand>
        <name>ATP</name>
        <dbReference type="ChEBI" id="CHEBI:30616"/>
    </ligand>
</feature>
<feature type="binding site" evidence="1">
    <location>
        <position position="127"/>
    </location>
    <ligand>
        <name>ATP</name>
        <dbReference type="ChEBI" id="CHEBI:30616"/>
    </ligand>
</feature>
<feature type="site" description="Interaction with tRNA" evidence="1">
    <location>
        <position position="128"/>
    </location>
</feature>
<feature type="site" description="Interaction with tRNA" evidence="1">
    <location>
        <position position="346"/>
    </location>
</feature>
<feature type="disulfide bond" description="Alternate" evidence="1">
    <location>
        <begin position="103"/>
        <end position="200"/>
    </location>
</feature>
<reference key="1">
    <citation type="journal article" date="2008" name="J. Bacteriol.">
        <title>Genome sequence of Lactobacillus helveticus: an organism distinguished by selective gene loss and IS element expansion.</title>
        <authorList>
            <person name="Callanan M."/>
            <person name="Kaleta P."/>
            <person name="O'Callaghan J."/>
            <person name="O'Sullivan O."/>
            <person name="Jordan K."/>
            <person name="McAuliffe O."/>
            <person name="Sangrador-Vegas A."/>
            <person name="Slattery L."/>
            <person name="Fitzgerald G.F."/>
            <person name="Beresford T."/>
            <person name="Ross R.P."/>
        </authorList>
    </citation>
    <scope>NUCLEOTIDE SEQUENCE [LARGE SCALE GENOMIC DNA]</scope>
    <source>
        <strain>DPC 4571</strain>
    </source>
</reference>
<keyword id="KW-0067">ATP-binding</keyword>
<keyword id="KW-0963">Cytoplasm</keyword>
<keyword id="KW-1015">Disulfide bond</keyword>
<keyword id="KW-0547">Nucleotide-binding</keyword>
<keyword id="KW-0694">RNA-binding</keyword>
<keyword id="KW-0808">Transferase</keyword>
<keyword id="KW-0819">tRNA processing</keyword>
<keyword id="KW-0820">tRNA-binding</keyword>
<gene>
    <name evidence="1" type="primary">mnmA</name>
    <name type="ordered locus">lhv_0869</name>
</gene>
<protein>
    <recommendedName>
        <fullName evidence="1">tRNA-specific 2-thiouridylase MnmA</fullName>
        <ecNumber evidence="1">2.8.1.13</ecNumber>
    </recommendedName>
</protein>